<accession>P31961</accession>
<accession>Q9HZ45</accession>
<organism>
    <name type="scientific">Pseudomonas aeruginosa (strain ATCC 15692 / DSM 22644 / CIP 104116 / JCM 14847 / LMG 12228 / 1C / PRS 101 / PAO1)</name>
    <dbReference type="NCBI Taxonomy" id="208964"/>
    <lineage>
        <taxon>Bacteria</taxon>
        <taxon>Pseudomonadati</taxon>
        <taxon>Pseudomonadota</taxon>
        <taxon>Gammaproteobacteria</taxon>
        <taxon>Pseudomonadales</taxon>
        <taxon>Pseudomonadaceae</taxon>
        <taxon>Pseudomonas</taxon>
    </lineage>
</organism>
<protein>
    <recommendedName>
        <fullName evidence="1">Phosphogluconate dehydratase</fullName>
        <ecNumber evidence="1">4.2.1.12</ecNumber>
    </recommendedName>
    <alternativeName>
        <fullName evidence="2">6-phosphogluconate dehydratase</fullName>
    </alternativeName>
</protein>
<comment type="function">
    <text evidence="1">Catalyzes the dehydration of 6-phospho-D-gluconate to 2-dehydro-3-deoxy-6-phospho-D-gluconate.</text>
</comment>
<comment type="catalytic activity">
    <reaction evidence="1">
        <text>6-phospho-D-gluconate = 2-dehydro-3-deoxy-6-phospho-D-gluconate + H2O</text>
        <dbReference type="Rhea" id="RHEA:17277"/>
        <dbReference type="ChEBI" id="CHEBI:15377"/>
        <dbReference type="ChEBI" id="CHEBI:57569"/>
        <dbReference type="ChEBI" id="CHEBI:58759"/>
        <dbReference type="EC" id="4.2.1.12"/>
    </reaction>
</comment>
<comment type="cofactor">
    <cofactor evidence="1">
        <name>[4Fe-4S] cluster</name>
        <dbReference type="ChEBI" id="CHEBI:49883"/>
    </cofactor>
    <text evidence="1">Binds 1 [4Fe-4S] cluster.</text>
</comment>
<comment type="pathway">
    <text evidence="1">Carbohydrate metabolism; Entner-Doudoroff pathway.</text>
</comment>
<comment type="similarity">
    <text evidence="1 3">Belongs to the IlvD/Edd family.</text>
</comment>
<sequence>MHPRVLEVTRRIQARSAATRQRYLEMVRAAASKGPHRGTLPCGNLAHGVAACGESDKQTLRLMNQANVAIVSAYNDMLSAHQPFERFPGLIKQALHEIGSVGQFAGGVPAMCDGVTQGEPGMELSLASRDVIAMSTAIALSHNMFDAALCLGVCDKIVPGLLIGSLRFGHLPTVFVPAGPMPTGISNKEKAAVRQLFAEGKATREELLASEMASYHAPGTCTFYGTANTNQLLVEVMGLHLPGASFVNPNTPLRDELTREAARQASRLTPENGNYVPMAEIVDEKAIVNSVVALLATGGSTNHTLHLLAIAQAAGIQLTWQDMSELSHVVPTLARIYPNGQADINHFQAAGGMSFLIRQLLDGGLLHEDVQTVAGPGLRRYTREPFLEDGRLVWREGPERSLDEAILRPLDKPFSAEGGLRLMEGNLGRGVMKVSAVAPEHQVVEAPVRIFHDQASLAAAFKAGELERDLVAVVRFQGPRANGMPELHKLTPFLGVLQDRGFKVALVTDGRMSGASGKVPAAIHVSPEAIAGGPLARLRDGDRVRVDGVNGELRVLVDDAEWQARSLEPAPQDGNLGCGRELFAFMRNAMSSAEEGACSFTESLNGWR</sequence>
<feature type="chain" id="PRO_0000103557" description="Phosphogluconate dehydratase">
    <location>
        <begin position="1"/>
        <end position="608"/>
    </location>
</feature>
<feature type="binding site" evidence="1">
    <location>
        <position position="154"/>
    </location>
    <ligand>
        <name>[4Fe-4S] cluster</name>
        <dbReference type="ChEBI" id="CHEBI:49883"/>
    </ligand>
</feature>
<feature type="binding site" evidence="1">
    <location>
        <position position="221"/>
    </location>
    <ligand>
        <name>[4Fe-4S] cluster</name>
        <dbReference type="ChEBI" id="CHEBI:49883"/>
    </ligand>
</feature>
<feature type="sequence conflict" description="In Ref. 1; AAA03487." evidence="3" ref="1">
    <original>FERFP</original>
    <variation>VRAPFR</variation>
    <location>
        <begin position="84"/>
        <end position="88"/>
    </location>
</feature>
<feature type="sequence conflict" description="In Ref. 1." evidence="3" ref="1">
    <original>QALHEIGSVGQF</original>
    <variation>PGACTRSVRSASV</variation>
    <location>
        <begin position="93"/>
        <end position="104"/>
    </location>
</feature>
<feature type="sequence conflict" description="In Ref. 1; AAA03487." evidence="3" ref="1">
    <original>IGSLR</original>
    <variation>SAAS</variation>
    <location>
        <begin position="163"/>
        <end position="167"/>
    </location>
</feature>
<feature type="sequence conflict" description="In Ref. 1; AAA03487." evidence="3" ref="1">
    <original>A</original>
    <variation>G</variation>
    <location>
        <position position="178"/>
    </location>
</feature>
<feature type="sequence conflict" description="In Ref. 1; AAA03487." evidence="3" ref="1">
    <original>L</original>
    <variation>VR</variation>
    <location>
        <position position="232"/>
    </location>
</feature>
<feature type="sequence conflict" description="In Ref. 1; AAA03487." evidence="3" ref="1">
    <original>T</original>
    <variation>S</variation>
    <location>
        <position position="258"/>
    </location>
</feature>
<reference key="1">
    <citation type="journal article" date="1994" name="J. Bacteriol.">
        <title>Two genes for carbohydrate catabolism are divergently transcribed from a region of DNA containing the hexC locus in Pseudomonas aeruginosa PAO1.</title>
        <authorList>
            <person name="Temple L.M."/>
            <person name="Sage A."/>
            <person name="Christie G.E."/>
            <person name="Phibbs P.V. Jr."/>
        </authorList>
    </citation>
    <scope>NUCLEOTIDE SEQUENCE [GENOMIC DNA]</scope>
    <source>
        <strain>ATCC 15692 / DSM 22644 / CIP 104116 / JCM 14847 / LMG 12228 / 1C / PRS 101 / PAO1</strain>
    </source>
</reference>
<reference key="2">
    <citation type="journal article" date="2000" name="Nature">
        <title>Complete genome sequence of Pseudomonas aeruginosa PAO1, an opportunistic pathogen.</title>
        <authorList>
            <person name="Stover C.K."/>
            <person name="Pham X.-Q.T."/>
            <person name="Erwin A.L."/>
            <person name="Mizoguchi S.D."/>
            <person name="Warrener P."/>
            <person name="Hickey M.J."/>
            <person name="Brinkman F.S.L."/>
            <person name="Hufnagle W.O."/>
            <person name="Kowalik D.J."/>
            <person name="Lagrou M."/>
            <person name="Garber R.L."/>
            <person name="Goltry L."/>
            <person name="Tolentino E."/>
            <person name="Westbrock-Wadman S."/>
            <person name="Yuan Y."/>
            <person name="Brody L.L."/>
            <person name="Coulter S.N."/>
            <person name="Folger K.R."/>
            <person name="Kas A."/>
            <person name="Larbig K."/>
            <person name="Lim R.M."/>
            <person name="Smith K.A."/>
            <person name="Spencer D.H."/>
            <person name="Wong G.K.-S."/>
            <person name="Wu Z."/>
            <person name="Paulsen I.T."/>
            <person name="Reizer J."/>
            <person name="Saier M.H. Jr."/>
            <person name="Hancock R.E.W."/>
            <person name="Lory S."/>
            <person name="Olson M.V."/>
        </authorList>
    </citation>
    <scope>NUCLEOTIDE SEQUENCE [LARGE SCALE GENOMIC DNA]</scope>
    <source>
        <strain>ATCC 15692 / DSM 22644 / CIP 104116 / JCM 14847 / LMG 12228 / 1C / PRS 101 / PAO1</strain>
    </source>
</reference>
<proteinExistence type="inferred from homology"/>
<evidence type="ECO:0000255" key="1">
    <source>
        <dbReference type="HAMAP-Rule" id="MF_02094"/>
    </source>
</evidence>
<evidence type="ECO:0000303" key="2">
    <source>
    </source>
</evidence>
<evidence type="ECO:0000305" key="3"/>
<gene>
    <name evidence="1 2" type="primary">edd</name>
    <name type="ordered locus">PA3194</name>
</gene>
<name>EDD_PSEAE</name>
<keyword id="KW-0004">4Fe-4S</keyword>
<keyword id="KW-0119">Carbohydrate metabolism</keyword>
<keyword id="KW-0311">Gluconate utilization</keyword>
<keyword id="KW-0408">Iron</keyword>
<keyword id="KW-0411">Iron-sulfur</keyword>
<keyword id="KW-0456">Lyase</keyword>
<keyword id="KW-0479">Metal-binding</keyword>
<keyword id="KW-1185">Reference proteome</keyword>
<dbReference type="EC" id="4.2.1.12" evidence="1"/>
<dbReference type="EMBL" id="M74256">
    <property type="protein sequence ID" value="AAA03487.1"/>
    <property type="molecule type" value="Unassigned_DNA"/>
</dbReference>
<dbReference type="EMBL" id="AE004091">
    <property type="protein sequence ID" value="AAG06582.1"/>
    <property type="molecule type" value="Genomic_DNA"/>
</dbReference>
<dbReference type="PIR" id="G83246">
    <property type="entry name" value="G83246"/>
</dbReference>
<dbReference type="RefSeq" id="NP_251884.1">
    <property type="nucleotide sequence ID" value="NC_002516.2"/>
</dbReference>
<dbReference type="RefSeq" id="WP_003091478.1">
    <property type="nucleotide sequence ID" value="NZ_QZGE01000019.1"/>
</dbReference>
<dbReference type="SMR" id="P31961"/>
<dbReference type="FunCoup" id="P31961">
    <property type="interactions" value="145"/>
</dbReference>
<dbReference type="STRING" id="208964.PA3194"/>
<dbReference type="PaxDb" id="208964-PA3194"/>
<dbReference type="GeneID" id="882909"/>
<dbReference type="KEGG" id="pae:PA3194"/>
<dbReference type="PATRIC" id="fig|208964.12.peg.3340"/>
<dbReference type="PseudoCAP" id="PA3194"/>
<dbReference type="HOGENOM" id="CLU_014271_1_2_6"/>
<dbReference type="InParanoid" id="P31961"/>
<dbReference type="OrthoDB" id="9807077at2"/>
<dbReference type="PhylomeDB" id="P31961"/>
<dbReference type="BioCyc" id="PAER208964:G1FZ6-3254-MONOMER"/>
<dbReference type="UniPathway" id="UPA00226"/>
<dbReference type="Proteomes" id="UP000002438">
    <property type="component" value="Chromosome"/>
</dbReference>
<dbReference type="GO" id="GO:0005829">
    <property type="term" value="C:cytosol"/>
    <property type="evidence" value="ECO:0000318"/>
    <property type="project" value="GO_Central"/>
</dbReference>
<dbReference type="GO" id="GO:0051539">
    <property type="term" value="F:4 iron, 4 sulfur cluster binding"/>
    <property type="evidence" value="ECO:0007669"/>
    <property type="project" value="UniProtKB-UniRule"/>
</dbReference>
<dbReference type="GO" id="GO:0046872">
    <property type="term" value="F:metal ion binding"/>
    <property type="evidence" value="ECO:0007669"/>
    <property type="project" value="UniProtKB-KW"/>
</dbReference>
<dbReference type="GO" id="GO:0004456">
    <property type="term" value="F:phosphogluconate dehydratase activity"/>
    <property type="evidence" value="ECO:0000318"/>
    <property type="project" value="GO_Central"/>
</dbReference>
<dbReference type="GO" id="GO:0019521">
    <property type="term" value="P:D-gluconate metabolic process"/>
    <property type="evidence" value="ECO:0007669"/>
    <property type="project" value="UniProtKB-KW"/>
</dbReference>
<dbReference type="GO" id="GO:0009255">
    <property type="term" value="P:Entner-Doudoroff pathway through 6-phosphogluconate"/>
    <property type="evidence" value="ECO:0007669"/>
    <property type="project" value="UniProtKB-UniRule"/>
</dbReference>
<dbReference type="FunFam" id="3.50.30.80:FF:000001">
    <property type="entry name" value="Dihydroxy-acid dehydratase"/>
    <property type="match status" value="1"/>
</dbReference>
<dbReference type="Gene3D" id="3.50.30.80">
    <property type="entry name" value="IlvD/EDD C-terminal domain-like"/>
    <property type="match status" value="1"/>
</dbReference>
<dbReference type="HAMAP" id="MF_02094">
    <property type="entry name" value="Edd"/>
    <property type="match status" value="1"/>
</dbReference>
<dbReference type="InterPro" id="IPR004786">
    <property type="entry name" value="6-phosphgluc_deHydtase"/>
</dbReference>
<dbReference type="InterPro" id="IPR042096">
    <property type="entry name" value="Dihydro-acid_dehy_C"/>
</dbReference>
<dbReference type="InterPro" id="IPR020558">
    <property type="entry name" value="DiOHA_6PGluconate_deHydtase_CS"/>
</dbReference>
<dbReference type="InterPro" id="IPR056740">
    <property type="entry name" value="ILV_EDD_C"/>
</dbReference>
<dbReference type="InterPro" id="IPR000581">
    <property type="entry name" value="ILV_EDD_N"/>
</dbReference>
<dbReference type="InterPro" id="IPR037237">
    <property type="entry name" value="IlvD/EDD_N"/>
</dbReference>
<dbReference type="NCBIfam" id="TIGR01196">
    <property type="entry name" value="edd"/>
    <property type="match status" value="1"/>
</dbReference>
<dbReference type="PANTHER" id="PTHR43661">
    <property type="entry name" value="D-XYLONATE DEHYDRATASE"/>
    <property type="match status" value="1"/>
</dbReference>
<dbReference type="PANTHER" id="PTHR43661:SF1">
    <property type="entry name" value="PHOSPHOGLUCONATE DEHYDRATASE"/>
    <property type="match status" value="1"/>
</dbReference>
<dbReference type="Pfam" id="PF24877">
    <property type="entry name" value="ILV_EDD_C"/>
    <property type="match status" value="1"/>
</dbReference>
<dbReference type="Pfam" id="PF00920">
    <property type="entry name" value="ILVD_EDD_N"/>
    <property type="match status" value="1"/>
</dbReference>
<dbReference type="SUPFAM" id="SSF143975">
    <property type="entry name" value="IlvD/EDD N-terminal domain-like"/>
    <property type="match status" value="1"/>
</dbReference>
<dbReference type="SUPFAM" id="SSF52016">
    <property type="entry name" value="LeuD/IlvD-like"/>
    <property type="match status" value="1"/>
</dbReference>
<dbReference type="PROSITE" id="PS00886">
    <property type="entry name" value="ILVD_EDD_1"/>
    <property type="match status" value="1"/>
</dbReference>
<dbReference type="PROSITE" id="PS00887">
    <property type="entry name" value="ILVD_EDD_2"/>
    <property type="match status" value="1"/>
</dbReference>